<gene>
    <name type="ORF">C02F5.13</name>
</gene>
<organism>
    <name type="scientific">Caenorhabditis elegans</name>
    <dbReference type="NCBI Taxonomy" id="6239"/>
    <lineage>
        <taxon>Eukaryota</taxon>
        <taxon>Metazoa</taxon>
        <taxon>Ecdysozoa</taxon>
        <taxon>Nematoda</taxon>
        <taxon>Chromadorea</taxon>
        <taxon>Rhabditida</taxon>
        <taxon>Rhabditina</taxon>
        <taxon>Rhabditomorpha</taxon>
        <taxon>Rhabditoidea</taxon>
        <taxon>Rhabditidae</taxon>
        <taxon>Peloderinae</taxon>
        <taxon>Caenorhabditis</taxon>
    </lineage>
</organism>
<reference key="1">
    <citation type="journal article" date="1994" name="Nature">
        <title>2.2 Mb of contiguous nucleotide sequence from chromosome III of C. elegans.</title>
        <authorList>
            <person name="Wilson R."/>
            <person name="Ainscough R."/>
            <person name="Anderson K."/>
            <person name="Baynes C."/>
            <person name="Berks M."/>
            <person name="Bonfield J."/>
            <person name="Burton J."/>
            <person name="Connell M."/>
            <person name="Copsey T."/>
            <person name="Cooper J."/>
            <person name="Coulson A."/>
            <person name="Craxton M."/>
            <person name="Dear S."/>
            <person name="Du Z."/>
            <person name="Durbin R."/>
            <person name="Favello A."/>
            <person name="Fraser A."/>
            <person name="Fulton L."/>
            <person name="Gardner A."/>
            <person name="Green P."/>
            <person name="Hawkins T."/>
            <person name="Hillier L."/>
            <person name="Jier M."/>
            <person name="Johnston L."/>
            <person name="Jones M."/>
            <person name="Kershaw J."/>
            <person name="Kirsten J."/>
            <person name="Laisster N."/>
            <person name="Latreille P."/>
            <person name="Lightning J."/>
            <person name="Lloyd C."/>
            <person name="Mortimore B."/>
            <person name="O'Callaghan M."/>
            <person name="Parsons J."/>
            <person name="Percy C."/>
            <person name="Rifken L."/>
            <person name="Roopra A."/>
            <person name="Saunders D."/>
            <person name="Shownkeen R."/>
            <person name="Sims M."/>
            <person name="Smaldon N."/>
            <person name="Smith A."/>
            <person name="Smith M."/>
            <person name="Sonnhammer E."/>
            <person name="Staden R."/>
            <person name="Sulston J."/>
            <person name="Thierry-Mieg J."/>
            <person name="Thomas K."/>
            <person name="Vaudin M."/>
            <person name="Vaughan K."/>
            <person name="Waterston R."/>
            <person name="Watson A."/>
            <person name="Weinstock L."/>
            <person name="Wilkinson-Sproat J."/>
            <person name="Wohldman P."/>
        </authorList>
    </citation>
    <scope>NUCLEOTIDE SEQUENCE [LARGE SCALE GENOMIC DNA]</scope>
    <source>
        <strain>Bristol N2</strain>
    </source>
</reference>
<reference key="2">
    <citation type="journal article" date="1998" name="Science">
        <title>Genome sequence of the nematode C. elegans: a platform for investigating biology.</title>
        <authorList>
            <consortium name="The C. elegans sequencing consortium"/>
        </authorList>
    </citation>
    <scope>NUCLEOTIDE SEQUENCE [LARGE SCALE GENOMIC DNA]</scope>
    <source>
        <strain>Bristol N2</strain>
    </source>
</reference>
<reference key="3">
    <citation type="journal article" date="2007" name="Mol. Cell. Proteomics">
        <title>Proteomics reveals N-linked glycoprotein diversity in Caenorhabditis elegans and suggests an atypical translocation mechanism for integral membrane proteins.</title>
        <authorList>
            <person name="Kaji H."/>
            <person name="Kamiie J."/>
            <person name="Kawakami H."/>
            <person name="Kido K."/>
            <person name="Yamauchi Y."/>
            <person name="Shinkawa T."/>
            <person name="Taoka M."/>
            <person name="Takahashi N."/>
            <person name="Isobe T."/>
        </authorList>
    </citation>
    <scope>GLYCOSYLATION [LARGE SCALE ANALYSIS] AT ASN-91</scope>
    <scope>IDENTIFICATION BY MASS SPECTROMETRY</scope>
    <source>
        <strain>Bristol N2</strain>
    </source>
</reference>
<name>TM2D1_CAEEL</name>
<accession>P61228</accession>
<proteinExistence type="evidence at protein level"/>
<keyword id="KW-0325">Glycoprotein</keyword>
<keyword id="KW-0472">Membrane</keyword>
<keyword id="KW-1185">Reference proteome</keyword>
<keyword id="KW-0732">Signal</keyword>
<keyword id="KW-0812">Transmembrane</keyword>
<keyword id="KW-1133">Transmembrane helix</keyword>
<dbReference type="EMBL" id="FO080288">
    <property type="protein sequence ID" value="CCD62638.1"/>
    <property type="molecule type" value="Genomic_DNA"/>
</dbReference>
<dbReference type="RefSeq" id="NP_001021138.1">
    <property type="nucleotide sequence ID" value="NM_001025967.2"/>
</dbReference>
<dbReference type="FunCoup" id="P61228">
    <property type="interactions" value="1962"/>
</dbReference>
<dbReference type="STRING" id="6239.C02F5.13.1"/>
<dbReference type="iPTMnet" id="P61228"/>
<dbReference type="PaxDb" id="6239-C02F5.13"/>
<dbReference type="PeptideAtlas" id="P61228"/>
<dbReference type="EnsemblMetazoa" id="C02F5.13.1">
    <property type="protein sequence ID" value="C02F5.13.1"/>
    <property type="gene ID" value="WBGene00015353"/>
</dbReference>
<dbReference type="GeneID" id="3565859"/>
<dbReference type="KEGG" id="cel:CELE_C02F5.13"/>
<dbReference type="UCSC" id="C02F5.13">
    <property type="organism name" value="c. elegans"/>
</dbReference>
<dbReference type="AGR" id="WB:WBGene00015353"/>
<dbReference type="CTD" id="3565859"/>
<dbReference type="WormBase" id="C02F5.13">
    <property type="protein sequence ID" value="CE36093"/>
    <property type="gene ID" value="WBGene00015353"/>
</dbReference>
<dbReference type="eggNOG" id="KOG1486">
    <property type="taxonomic scope" value="Eukaryota"/>
</dbReference>
<dbReference type="eggNOG" id="KOG4272">
    <property type="taxonomic scope" value="Eukaryota"/>
</dbReference>
<dbReference type="GeneTree" id="ENSGT00730000111181"/>
<dbReference type="HOGENOM" id="CLU_084872_3_1_1"/>
<dbReference type="InParanoid" id="P61228"/>
<dbReference type="OMA" id="TGHLMPE"/>
<dbReference type="OrthoDB" id="408511at2759"/>
<dbReference type="PhylomeDB" id="P61228"/>
<dbReference type="PRO" id="PR:P61228"/>
<dbReference type="Proteomes" id="UP000001940">
    <property type="component" value="Chromosome III"/>
</dbReference>
<dbReference type="Bgee" id="WBGene00015353">
    <property type="expression patterns" value="Expressed in germ line (C elegans) and 4 other cell types or tissues"/>
</dbReference>
<dbReference type="GO" id="GO:0016020">
    <property type="term" value="C:membrane"/>
    <property type="evidence" value="ECO:0007669"/>
    <property type="project" value="UniProtKB-SubCell"/>
</dbReference>
<dbReference type="InterPro" id="IPR007829">
    <property type="entry name" value="TM2"/>
</dbReference>
<dbReference type="InterPro" id="IPR050932">
    <property type="entry name" value="TM2D1-3-like"/>
</dbReference>
<dbReference type="PANTHER" id="PTHR21016">
    <property type="entry name" value="BETA-AMYLOID BINDING PROTEIN-RELATED"/>
    <property type="match status" value="1"/>
</dbReference>
<dbReference type="PANTHER" id="PTHR21016:SF4">
    <property type="entry name" value="TM2 DOMAIN-CONTAINING PROTEIN 2"/>
    <property type="match status" value="1"/>
</dbReference>
<dbReference type="Pfam" id="PF05154">
    <property type="entry name" value="TM2"/>
    <property type="match status" value="1"/>
</dbReference>
<sequence>MRRLPWLIPFFLVNISNGNNEFRIEFEYPNNEKSEKCFDSSKENDLLDLFYVSTNPLGPVVECRFLENSFILCEDPVPLYGPGQTGQQPANESFRNEGKCLKMGGYRAEDVEFTNVKCRVLPCIECHGPRTFTKSTPCIIYNGHYFLTTLLYSIFLGVVAVDRFCLGYSAMAVGKLMTLGGFGIWWIVDIFLLVLGVLGPADDSSWEPYY</sequence>
<evidence type="ECO:0000255" key="1"/>
<evidence type="ECO:0000269" key="2">
    <source>
    </source>
</evidence>
<evidence type="ECO:0000305" key="3"/>
<comment type="subcellular location">
    <subcellularLocation>
        <location evidence="3">Membrane</location>
        <topology evidence="3">Multi-pass membrane protein</topology>
    </subcellularLocation>
</comment>
<comment type="similarity">
    <text evidence="3">Belongs to the TM2 family.</text>
</comment>
<protein>
    <recommendedName>
        <fullName>TM2 domain-containing protein C02F5.13</fullName>
    </recommendedName>
</protein>
<feature type="signal peptide" evidence="1">
    <location>
        <begin position="1"/>
        <end position="18"/>
    </location>
</feature>
<feature type="chain" id="PRO_0000065113" description="TM2 domain-containing protein C02F5.13">
    <location>
        <begin position="19"/>
        <end position="210"/>
    </location>
</feature>
<feature type="topological domain" description="Extracellular" evidence="3">
    <location>
        <begin position="19"/>
        <end position="138"/>
    </location>
</feature>
<feature type="transmembrane region" description="Helical" evidence="1">
    <location>
        <begin position="139"/>
        <end position="159"/>
    </location>
</feature>
<feature type="topological domain" description="Cytoplasmic" evidence="3">
    <location>
        <begin position="160"/>
        <end position="178"/>
    </location>
</feature>
<feature type="transmembrane region" description="Helical" evidence="1">
    <location>
        <begin position="179"/>
        <end position="199"/>
    </location>
</feature>
<feature type="topological domain" description="Extracellular" evidence="3">
    <location>
        <begin position="200"/>
        <end position="210"/>
    </location>
</feature>
<feature type="domain" description="TM2" evidence="1">
    <location>
        <begin position="143"/>
        <end position="191"/>
    </location>
</feature>
<feature type="glycosylation site" description="N-linked (GlcNAc...) asparagine" evidence="2">
    <location>
        <position position="91"/>
    </location>
</feature>